<keyword id="KW-0997">Cell inner membrane</keyword>
<keyword id="KW-1003">Cell membrane</keyword>
<keyword id="KW-0472">Membrane</keyword>
<keyword id="KW-1185">Reference proteome</keyword>
<organism>
    <name type="scientific">Campylobacter jejuni subsp. jejuni serotype O:2 (strain ATCC 700819 / NCTC 11168)</name>
    <dbReference type="NCBI Taxonomy" id="192222"/>
    <lineage>
        <taxon>Bacteria</taxon>
        <taxon>Pseudomonadati</taxon>
        <taxon>Campylobacterota</taxon>
        <taxon>Epsilonproteobacteria</taxon>
        <taxon>Campylobacterales</taxon>
        <taxon>Campylobacteraceae</taxon>
        <taxon>Campylobacter</taxon>
    </lineage>
</organism>
<proteinExistence type="inferred from homology"/>
<reference key="1">
    <citation type="journal article" date="2000" name="Nature">
        <title>The genome sequence of the food-borne pathogen Campylobacter jejuni reveals hypervariable sequences.</title>
        <authorList>
            <person name="Parkhill J."/>
            <person name="Wren B.W."/>
            <person name="Mungall K.L."/>
            <person name="Ketley J.M."/>
            <person name="Churcher C.M."/>
            <person name="Basham D."/>
            <person name="Chillingworth T."/>
            <person name="Davies R.M."/>
            <person name="Feltwell T."/>
            <person name="Holroyd S."/>
            <person name="Jagels K."/>
            <person name="Karlyshev A.V."/>
            <person name="Moule S."/>
            <person name="Pallen M.J."/>
            <person name="Penn C.W."/>
            <person name="Quail M.A."/>
            <person name="Rajandream M.A."/>
            <person name="Rutherford K.M."/>
            <person name="van Vliet A.H.M."/>
            <person name="Whitehead S."/>
            <person name="Barrell B.G."/>
        </authorList>
    </citation>
    <scope>NUCLEOTIDE SEQUENCE [LARGE SCALE GENOMIC DNA]</scope>
    <source>
        <strain>ATCC 700819 / NCTC 11168</strain>
    </source>
</reference>
<evidence type="ECO:0000255" key="1">
    <source>
        <dbReference type="HAMAP-Rule" id="MF_00386"/>
    </source>
</evidence>
<protein>
    <recommendedName>
        <fullName evidence="1">Putative membrane protein insertion efficiency factor</fullName>
    </recommendedName>
</protein>
<name>YIDD_CAMJE</name>
<feature type="chain" id="PRO_0000171805" description="Putative membrane protein insertion efficiency factor">
    <location>
        <begin position="1"/>
        <end position="113"/>
    </location>
</feature>
<accession>Q9PNX6</accession>
<accession>Q0P9U0</accession>
<sequence>MICLKILRFYQKFLSPLKPAACRYYPSCSEYALWQFQKKNFFLAFFSTFFRILRCNPFFKGGFDYPRVSKNFYPINLCFKPIFLAEKQLCFLYIPYKNKSFYLIKIIFKRTNQ</sequence>
<dbReference type="EMBL" id="AL111168">
    <property type="protein sequence ID" value="CAL35079.1"/>
    <property type="molecule type" value="Genomic_DNA"/>
</dbReference>
<dbReference type="PIR" id="F81370">
    <property type="entry name" value="F81370"/>
</dbReference>
<dbReference type="RefSeq" id="YP_002344357.1">
    <property type="nucleotide sequence ID" value="NC_002163.1"/>
</dbReference>
<dbReference type="IntAct" id="Q9PNX6">
    <property type="interactions" value="11"/>
</dbReference>
<dbReference type="STRING" id="192222.Cj0959c"/>
<dbReference type="PaxDb" id="192222-Cj0959c"/>
<dbReference type="EnsemblBacteria" id="CAL35079">
    <property type="protein sequence ID" value="CAL35079"/>
    <property type="gene ID" value="Cj0959c"/>
</dbReference>
<dbReference type="GeneID" id="905228"/>
<dbReference type="KEGG" id="cje:Cj0959c"/>
<dbReference type="PATRIC" id="fig|192222.6.peg.943"/>
<dbReference type="eggNOG" id="COG0759">
    <property type="taxonomic scope" value="Bacteria"/>
</dbReference>
<dbReference type="HOGENOM" id="CLU_144811_4_0_7"/>
<dbReference type="OrthoDB" id="9801753at2"/>
<dbReference type="Proteomes" id="UP000000799">
    <property type="component" value="Chromosome"/>
</dbReference>
<dbReference type="GO" id="GO:0005886">
    <property type="term" value="C:plasma membrane"/>
    <property type="evidence" value="ECO:0007669"/>
    <property type="project" value="UniProtKB-SubCell"/>
</dbReference>
<dbReference type="HAMAP" id="MF_00386">
    <property type="entry name" value="UPF0161_YidD"/>
    <property type="match status" value="1"/>
</dbReference>
<dbReference type="InterPro" id="IPR002696">
    <property type="entry name" value="Membr_insert_effic_factor_YidD"/>
</dbReference>
<dbReference type="NCBIfam" id="TIGR00278">
    <property type="entry name" value="membrane protein insertion efficiency factor YidD"/>
    <property type="match status" value="1"/>
</dbReference>
<dbReference type="PANTHER" id="PTHR33383">
    <property type="entry name" value="MEMBRANE PROTEIN INSERTION EFFICIENCY FACTOR-RELATED"/>
    <property type="match status" value="1"/>
</dbReference>
<dbReference type="PANTHER" id="PTHR33383:SF1">
    <property type="entry name" value="MEMBRANE PROTEIN INSERTION EFFICIENCY FACTOR-RELATED"/>
    <property type="match status" value="1"/>
</dbReference>
<dbReference type="Pfam" id="PF01809">
    <property type="entry name" value="YidD"/>
    <property type="match status" value="1"/>
</dbReference>
<dbReference type="SMART" id="SM01234">
    <property type="entry name" value="Haemolytic"/>
    <property type="match status" value="1"/>
</dbReference>
<comment type="function">
    <text evidence="1">Could be involved in insertion of integral membrane proteins into the membrane.</text>
</comment>
<comment type="subcellular location">
    <subcellularLocation>
        <location evidence="1">Cell inner membrane</location>
        <topology evidence="1">Peripheral membrane protein</topology>
        <orientation evidence="1">Cytoplasmic side</orientation>
    </subcellularLocation>
</comment>
<comment type="similarity">
    <text evidence="1">Belongs to the UPF0161 family.</text>
</comment>
<gene>
    <name type="ordered locus">Cj0959c</name>
</gene>